<sequence>METAIVAAASAIGAGIAVATGIGAGIGQGIAAAKAAEAVGNQPEAKGDITSTLLLGVAIAESSAIYGLVISIILLFVNPFFKYLGM</sequence>
<dbReference type="EMBL" id="AM180355">
    <property type="protein sequence ID" value="CAJ70376.1"/>
    <property type="molecule type" value="Genomic_DNA"/>
</dbReference>
<dbReference type="RefSeq" id="WP_003421370.1">
    <property type="nucleotide sequence ID" value="NZ_JAUPES010000009.1"/>
</dbReference>
<dbReference type="RefSeq" id="YP_001089993.1">
    <property type="nucleotide sequence ID" value="NC_009089.1"/>
</dbReference>
<dbReference type="SMR" id="Q180X0"/>
<dbReference type="STRING" id="272563.CD630_34730"/>
<dbReference type="EnsemblBacteria" id="CAJ70376">
    <property type="protein sequence ID" value="CAJ70376"/>
    <property type="gene ID" value="CD630_34730"/>
</dbReference>
<dbReference type="GeneID" id="66355934"/>
<dbReference type="KEGG" id="cdf:CD630_34730"/>
<dbReference type="KEGG" id="pdc:CDIF630_03784"/>
<dbReference type="PATRIC" id="fig|272563.120.peg.3670"/>
<dbReference type="eggNOG" id="COG0636">
    <property type="taxonomic scope" value="Bacteria"/>
</dbReference>
<dbReference type="OrthoDB" id="9810379at2"/>
<dbReference type="BioCyc" id="PDIF272563:G12WB-3653-MONOMER"/>
<dbReference type="Proteomes" id="UP000001978">
    <property type="component" value="Chromosome"/>
</dbReference>
<dbReference type="GO" id="GO:0005886">
    <property type="term" value="C:plasma membrane"/>
    <property type="evidence" value="ECO:0007669"/>
    <property type="project" value="UniProtKB-SubCell"/>
</dbReference>
<dbReference type="GO" id="GO:0045259">
    <property type="term" value="C:proton-transporting ATP synthase complex"/>
    <property type="evidence" value="ECO:0007669"/>
    <property type="project" value="UniProtKB-KW"/>
</dbReference>
<dbReference type="GO" id="GO:0033177">
    <property type="term" value="C:proton-transporting two-sector ATPase complex, proton-transporting domain"/>
    <property type="evidence" value="ECO:0007669"/>
    <property type="project" value="InterPro"/>
</dbReference>
<dbReference type="GO" id="GO:0008289">
    <property type="term" value="F:lipid binding"/>
    <property type="evidence" value="ECO:0007669"/>
    <property type="project" value="UniProtKB-KW"/>
</dbReference>
<dbReference type="GO" id="GO:0046933">
    <property type="term" value="F:proton-transporting ATP synthase activity, rotational mechanism"/>
    <property type="evidence" value="ECO:0007669"/>
    <property type="project" value="UniProtKB-UniRule"/>
</dbReference>
<dbReference type="Gene3D" id="1.20.120.610">
    <property type="entry name" value="lithium bound rotor ring of v- atpase"/>
    <property type="match status" value="1"/>
</dbReference>
<dbReference type="HAMAP" id="MF_01396">
    <property type="entry name" value="ATP_synth_c_bact"/>
    <property type="match status" value="1"/>
</dbReference>
<dbReference type="InterPro" id="IPR005953">
    <property type="entry name" value="ATP_synth_csu_bac/chlpt"/>
</dbReference>
<dbReference type="InterPro" id="IPR000454">
    <property type="entry name" value="ATP_synth_F0_csu"/>
</dbReference>
<dbReference type="InterPro" id="IPR002379">
    <property type="entry name" value="ATPase_proteolipid_c-like_dom"/>
</dbReference>
<dbReference type="InterPro" id="IPR035921">
    <property type="entry name" value="F/V-ATP_Csub_sf"/>
</dbReference>
<dbReference type="NCBIfam" id="TIGR01260">
    <property type="entry name" value="ATP_synt_c"/>
    <property type="match status" value="1"/>
</dbReference>
<dbReference type="Pfam" id="PF00137">
    <property type="entry name" value="ATP-synt_C"/>
    <property type="match status" value="1"/>
</dbReference>
<dbReference type="PRINTS" id="PR00124">
    <property type="entry name" value="ATPASEC"/>
</dbReference>
<dbReference type="SUPFAM" id="SSF81333">
    <property type="entry name" value="F1F0 ATP synthase subunit C"/>
    <property type="match status" value="1"/>
</dbReference>
<proteinExistence type="inferred from homology"/>
<feature type="chain" id="PRO_5000078102" description="ATP synthase subunit c">
    <location>
        <begin position="1"/>
        <end position="86"/>
    </location>
</feature>
<feature type="transmembrane region" description="Helical" evidence="1">
    <location>
        <begin position="4"/>
        <end position="24"/>
    </location>
</feature>
<feature type="transmembrane region" description="Helical" evidence="1">
    <location>
        <begin position="57"/>
        <end position="77"/>
    </location>
</feature>
<feature type="site" description="Reversibly protonated during proton transport" evidence="1">
    <location>
        <position position="61"/>
    </location>
</feature>
<reference key="1">
    <citation type="journal article" date="2006" name="Nat. Genet.">
        <title>The multidrug-resistant human pathogen Clostridium difficile has a highly mobile, mosaic genome.</title>
        <authorList>
            <person name="Sebaihia M."/>
            <person name="Wren B.W."/>
            <person name="Mullany P."/>
            <person name="Fairweather N.F."/>
            <person name="Minton N."/>
            <person name="Stabler R."/>
            <person name="Thomson N.R."/>
            <person name="Roberts A.P."/>
            <person name="Cerdeno-Tarraga A.M."/>
            <person name="Wang H."/>
            <person name="Holden M.T.G."/>
            <person name="Wright A."/>
            <person name="Churcher C."/>
            <person name="Quail M.A."/>
            <person name="Baker S."/>
            <person name="Bason N."/>
            <person name="Brooks K."/>
            <person name="Chillingworth T."/>
            <person name="Cronin A."/>
            <person name="Davis P."/>
            <person name="Dowd L."/>
            <person name="Fraser A."/>
            <person name="Feltwell T."/>
            <person name="Hance Z."/>
            <person name="Holroyd S."/>
            <person name="Jagels K."/>
            <person name="Moule S."/>
            <person name="Mungall K."/>
            <person name="Price C."/>
            <person name="Rabbinowitsch E."/>
            <person name="Sharp S."/>
            <person name="Simmonds M."/>
            <person name="Stevens K."/>
            <person name="Unwin L."/>
            <person name="Whithead S."/>
            <person name="Dupuy B."/>
            <person name="Dougan G."/>
            <person name="Barrell B."/>
            <person name="Parkhill J."/>
        </authorList>
    </citation>
    <scope>NUCLEOTIDE SEQUENCE [LARGE SCALE GENOMIC DNA]</scope>
    <source>
        <strain>630</strain>
    </source>
</reference>
<name>ATPL_CLOD6</name>
<comment type="function">
    <text evidence="1">F(1)F(0) ATP synthase produces ATP from ADP in the presence of a proton or sodium gradient. F-type ATPases consist of two structural domains, F(1) containing the extramembraneous catalytic core and F(0) containing the membrane proton channel, linked together by a central stalk and a peripheral stalk. During catalysis, ATP synthesis in the catalytic domain of F(1) is coupled via a rotary mechanism of the central stalk subunits to proton translocation.</text>
</comment>
<comment type="function">
    <text evidence="1">Key component of the F(0) channel; it plays a direct role in translocation across the membrane. A homomeric c-ring of between 10-14 subunits forms the central stalk rotor element with the F(1) delta and epsilon subunits.</text>
</comment>
<comment type="subunit">
    <text evidence="1">F-type ATPases have 2 components, F(1) - the catalytic core - and F(0) - the membrane proton channel. F(1) has five subunits: alpha(3), beta(3), gamma(1), delta(1), epsilon(1). F(0) has three main subunits: a(1), b(2) and c(10-14). The alpha and beta chains form an alternating ring which encloses part of the gamma chain. F(1) is attached to F(0) by a central stalk formed by the gamma and epsilon chains, while a peripheral stalk is formed by the delta and b chains.</text>
</comment>
<comment type="subcellular location">
    <subcellularLocation>
        <location evidence="1">Cell membrane</location>
        <topology evidence="1">Multi-pass membrane protein</topology>
    </subcellularLocation>
</comment>
<comment type="similarity">
    <text evidence="1">Belongs to the ATPase C chain family.</text>
</comment>
<protein>
    <recommendedName>
        <fullName evidence="1">ATP synthase subunit c</fullName>
    </recommendedName>
    <alternativeName>
        <fullName evidence="1">ATP synthase F(0) sector subunit c</fullName>
    </alternativeName>
    <alternativeName>
        <fullName evidence="1">F-type ATPase subunit c</fullName>
        <shortName evidence="1">F-ATPase subunit c</shortName>
    </alternativeName>
    <alternativeName>
        <fullName evidence="1">Lipid-binding protein</fullName>
    </alternativeName>
</protein>
<accession>Q180X0</accession>
<keyword id="KW-0066">ATP synthesis</keyword>
<keyword id="KW-1003">Cell membrane</keyword>
<keyword id="KW-0138">CF(0)</keyword>
<keyword id="KW-0375">Hydrogen ion transport</keyword>
<keyword id="KW-0406">Ion transport</keyword>
<keyword id="KW-0446">Lipid-binding</keyword>
<keyword id="KW-0472">Membrane</keyword>
<keyword id="KW-1185">Reference proteome</keyword>
<keyword id="KW-0812">Transmembrane</keyword>
<keyword id="KW-1133">Transmembrane helix</keyword>
<keyword id="KW-0813">Transport</keyword>
<gene>
    <name evidence="1" type="primary">atpE</name>
    <name type="ordered locus">CD630_34730</name>
</gene>
<organism>
    <name type="scientific">Clostridioides difficile (strain 630)</name>
    <name type="common">Peptoclostridium difficile</name>
    <dbReference type="NCBI Taxonomy" id="272563"/>
    <lineage>
        <taxon>Bacteria</taxon>
        <taxon>Bacillati</taxon>
        <taxon>Bacillota</taxon>
        <taxon>Clostridia</taxon>
        <taxon>Peptostreptococcales</taxon>
        <taxon>Peptostreptococcaceae</taxon>
        <taxon>Clostridioides</taxon>
    </lineage>
</organism>
<evidence type="ECO:0000255" key="1">
    <source>
        <dbReference type="HAMAP-Rule" id="MF_01396"/>
    </source>
</evidence>